<gene>
    <name evidence="3" type="primary">POL</name>
</gene>
<name>DPOL_ADE07</name>
<reference key="1">
    <citation type="journal article" date="1983" name="Gene">
        <title>The nucleotide sequence of the genes encoded in early region 2b of human adenovirus type 7.</title>
        <authorList>
            <person name="Engler J.A."/>
            <person name="Hoppe M.S."/>
            <person name="van Bree M.P."/>
        </authorList>
    </citation>
    <scope>NUCLEOTIDE SEQUENCE [GENOMIC DNA]</scope>
</reference>
<feature type="chain" id="PRO_0000046495" description="DNA polymerase">
    <location>
        <begin position="1"/>
        <end position="1122"/>
    </location>
</feature>
<comment type="function">
    <text evidence="1 2 3">Eukaryotic-type DNA polymerase involved in viral genomic replication. DNA synthesis is protein primed, and acts in a strand displacement replication. Assembles in complex with viral pTP, DBP, host NFIA and host POU2F1/OCT1 on viral origin of replication. The polymerase covalently transfers dCMP onto pTP, thereby initiating complementary strand synthesis.</text>
</comment>
<comment type="catalytic activity">
    <reaction evidence="3">
        <text>DNA(n) + a 2'-deoxyribonucleoside 5'-triphosphate = DNA(n+1) + diphosphate</text>
        <dbReference type="Rhea" id="RHEA:22508"/>
        <dbReference type="Rhea" id="RHEA-COMP:17339"/>
        <dbReference type="Rhea" id="RHEA-COMP:17340"/>
        <dbReference type="ChEBI" id="CHEBI:33019"/>
        <dbReference type="ChEBI" id="CHEBI:61560"/>
        <dbReference type="ChEBI" id="CHEBI:173112"/>
        <dbReference type="EC" id="2.7.7.7"/>
    </reaction>
</comment>
<comment type="subunit">
    <text evidence="2 3">Heterodimer with the terminal protein; this heterodimer binds to bp 9 to 18 of the genome. Forms a complex with viral pTP, DBP and hosts NFIA and POU2F1/OCT1 for initiation of replication.</text>
</comment>
<comment type="subcellular location">
    <subcellularLocation>
        <location evidence="1 3">Host nucleus</location>
    </subcellularLocation>
</comment>
<comment type="miscellaneous">
    <text evidence="3">This DNA polymerase requires a protein as a primer.</text>
</comment>
<comment type="similarity">
    <text evidence="3 4">Belongs to the DNA polymerase type-B family.</text>
</comment>
<organism>
    <name type="scientific">Human adenovirus B serotype 7</name>
    <name type="common">HAdV-7</name>
    <name type="synonym">Human adenovirus 7</name>
    <dbReference type="NCBI Taxonomy" id="10519"/>
    <lineage>
        <taxon>Viruses</taxon>
        <taxon>Varidnaviria</taxon>
        <taxon>Bamfordvirae</taxon>
        <taxon>Preplasmiviricota</taxon>
        <taxon>Tectiliviricetes</taxon>
        <taxon>Rowavirales</taxon>
        <taxon>Adenoviridae</taxon>
        <taxon>Mastadenovirus</taxon>
        <taxon>Human mastadenovirus B</taxon>
    </lineage>
</organism>
<dbReference type="EC" id="2.7.7.7" evidence="3"/>
<dbReference type="EMBL" id="X03000">
    <property type="protein sequence ID" value="CAA26770.1"/>
    <property type="molecule type" value="Genomic_DNA"/>
</dbReference>
<dbReference type="GO" id="GO:0042025">
    <property type="term" value="C:host cell nucleus"/>
    <property type="evidence" value="ECO:0007669"/>
    <property type="project" value="UniProtKB-SubCell"/>
</dbReference>
<dbReference type="GO" id="GO:0008408">
    <property type="term" value="F:3'-5' exonuclease activity"/>
    <property type="evidence" value="ECO:0007669"/>
    <property type="project" value="UniProtKB-UniRule"/>
</dbReference>
<dbReference type="GO" id="GO:0003677">
    <property type="term" value="F:DNA binding"/>
    <property type="evidence" value="ECO:0007669"/>
    <property type="project" value="UniProtKB-UniRule"/>
</dbReference>
<dbReference type="GO" id="GO:0003887">
    <property type="term" value="F:DNA-directed DNA polymerase activity"/>
    <property type="evidence" value="ECO:0007669"/>
    <property type="project" value="UniProtKB-UniRule"/>
</dbReference>
<dbReference type="GO" id="GO:0000166">
    <property type="term" value="F:nucleotide binding"/>
    <property type="evidence" value="ECO:0007669"/>
    <property type="project" value="UniProtKB-UniRule"/>
</dbReference>
<dbReference type="GO" id="GO:0006261">
    <property type="term" value="P:DNA-templated DNA replication"/>
    <property type="evidence" value="ECO:0007669"/>
    <property type="project" value="UniProtKB-UniRule"/>
</dbReference>
<dbReference type="GO" id="GO:0039693">
    <property type="term" value="P:viral DNA genome replication"/>
    <property type="evidence" value="ECO:0007669"/>
    <property type="project" value="UniProtKB-UniRule"/>
</dbReference>
<dbReference type="Gene3D" id="1.10.287.690">
    <property type="entry name" value="Helix hairpin bin"/>
    <property type="match status" value="1"/>
</dbReference>
<dbReference type="Gene3D" id="3.90.1600.10">
    <property type="entry name" value="Palm domain of DNA polymerase"/>
    <property type="match status" value="1"/>
</dbReference>
<dbReference type="Gene3D" id="3.30.1770.10">
    <property type="entry name" value="TPR 1 domain of DNA polymerase"/>
    <property type="match status" value="1"/>
</dbReference>
<dbReference type="HAMAP" id="MF_04055">
    <property type="entry name" value="ADV_DPOL"/>
    <property type="match status" value="1"/>
</dbReference>
<dbReference type="InterPro" id="IPR006172">
    <property type="entry name" value="DNA-dir_DNA_pol_B"/>
</dbReference>
<dbReference type="InterPro" id="IPR014382">
    <property type="entry name" value="DNA-dir_DNA_pol_B_adenovir"/>
</dbReference>
<dbReference type="InterPro" id="IPR017964">
    <property type="entry name" value="DNA-dir_DNA_pol_B_CS"/>
</dbReference>
<dbReference type="InterPro" id="IPR004868">
    <property type="entry name" value="DNA-dir_DNA_pol_B_mt/vir"/>
</dbReference>
<dbReference type="InterPro" id="IPR043502">
    <property type="entry name" value="DNA/RNA_pol_sf"/>
</dbReference>
<dbReference type="InterPro" id="IPR023211">
    <property type="entry name" value="DNA_pol_palm_dom_sf"/>
</dbReference>
<dbReference type="InterPro" id="IPR012337">
    <property type="entry name" value="RNaseH-like_sf"/>
</dbReference>
<dbReference type="Pfam" id="PF03175">
    <property type="entry name" value="DNA_pol_B_2"/>
    <property type="match status" value="1"/>
</dbReference>
<dbReference type="PIRSF" id="PIRSF000788">
    <property type="entry name" value="DPol_ADV"/>
    <property type="match status" value="1"/>
</dbReference>
<dbReference type="PRINTS" id="PR00106">
    <property type="entry name" value="DNAPOLB"/>
</dbReference>
<dbReference type="SMART" id="SM00486">
    <property type="entry name" value="POLBc"/>
    <property type="match status" value="1"/>
</dbReference>
<dbReference type="SUPFAM" id="SSF56672">
    <property type="entry name" value="DNA/RNA polymerases"/>
    <property type="match status" value="1"/>
</dbReference>
<dbReference type="SUPFAM" id="SSF53098">
    <property type="entry name" value="Ribonuclease H-like"/>
    <property type="match status" value="1"/>
</dbReference>
<dbReference type="PROSITE" id="PS00116">
    <property type="entry name" value="DNA_POLYMERASE_B"/>
    <property type="match status" value="1"/>
</dbReference>
<evidence type="ECO:0000250" key="1">
    <source>
        <dbReference type="UniProtKB" id="P03261"/>
    </source>
</evidence>
<evidence type="ECO:0000250" key="2">
    <source>
        <dbReference type="UniProtKB" id="P04495"/>
    </source>
</evidence>
<evidence type="ECO:0000255" key="3">
    <source>
        <dbReference type="HAMAP-Rule" id="MF_04055"/>
    </source>
</evidence>
<evidence type="ECO:0000305" key="4"/>
<protein>
    <recommendedName>
        <fullName evidence="3">DNA polymerase</fullName>
        <ecNumber evidence="3">2.7.7.7</ecNumber>
    </recommendedName>
</protein>
<proteinExistence type="inferred from homology"/>
<keyword id="KW-0235">DNA replication</keyword>
<keyword id="KW-0238">DNA-binding</keyword>
<keyword id="KW-0239">DNA-directed DNA polymerase</keyword>
<keyword id="KW-1048">Host nucleus</keyword>
<keyword id="KW-0548">Nucleotidyltransferase</keyword>
<keyword id="KW-0808">Transferase</keyword>
<keyword id="KW-1194">Viral DNA replication</keyword>
<organismHost>
    <name type="scientific">Homo sapiens</name>
    <name type="common">Human</name>
    <dbReference type="NCBI Taxonomy" id="9606"/>
</organismHost>
<accession>P05664</accession>
<sequence length="1122" mass="128635">MQEATEPPPPKRKNKGTVVAPKGHGTLQAIDISTNGPVEIKYHLNLPHALEKIMQVNLLTLPTNLTPQRLRTLDSSGLRALVLELRPCRAEVWTCLPRGLVSMTTIETEDGHADADNIVEREVQAPSLNFPLKFLVKGSQVQLIHEVHPVNRCEYCGRLYKHKHECSARRREFYFHHINSHSSNWWQEIQFFPIGSHPRTERLFLTYDVETYTWMGSFGKQLIPFMLVMKLSGDQRLVNIAYDIAMKLKWDRWRQDPQTFYCITPEKMAVGQHFRQYRDQLQTALAVDLWSSFLKANPHMHEWALEHYALTDPTDLTFEELKKLPHVRGTPRFLELYIVGHNINGFDEIVLAAQVINNRAEVPQPFKITRNFMPRAGEILFNDVTFALPNPAYKKRADFQLWEQGACDDIDFKYQFLKVMVRDTFALTHTSLRNAAQAYSLPVEKGCCPYKAVNQFYMLGSYRAEKDGFPLEEYWKDHEEYLLNRELWEKKSQPRYDIIQETLNYCALDVLVTAELVAKLQESYAHFIRDSVGLPHVHFNIFQRPTISSNSHAIFRQIVYRAEKPNRTNLGPGLLAPSHELYDYVRASIRGGRCYPTYIGILEEPLYVYDICGMYASALTHPMPWGTPLNPYERALAVREWQMTLDDPATISYFDKDLLPGIFTIDADPPDEFMLDPLPPFCSRKGGRLCWTNEPLRGEVATTVDLITLHNRGWRVRIVPDELTTIFPEWKCVAREYVQLNIAAKERADKEKNQTMRSIAKLLSNALYGSFATKLDNKKIVFSDQMDESLIKGISAGTVNIKSSSFLETDNLSAEVMPAFEREYLPQQLALLDSDPEDSEDEQRSAPFYTPPAGTPGHVAYTYKPITFLDVEEGDMCLHTVEKVDPLVDNDRYPSHVASFVLAWTRAFVSEWAGFLYEEDRGTPLEDRPIKSVYGDTDSLFVTQRGHELMETKGKKRIKKHGGKLVFDPDEPDLTWLVECETVCVSCGADAYSPESIFLAPKLYALKCIYCPACHKTSKGKLRAKGHAAEALNYELMVNCYLADMQGADRQRFSTSRMSLKRTLASAQPGAHPFTVTETTLTRTLRPWKDRTLAALDAHRLIPYSRSRPNPRNEEVCWIEMP</sequence>